<reference key="1">
    <citation type="journal article" date="2002" name="Nucleic Acids Res.">
        <title>Genome sequence of Oceanobacillus iheyensis isolated from the Iheya Ridge and its unexpected adaptive capabilities to extreme environments.</title>
        <authorList>
            <person name="Takami H."/>
            <person name="Takaki Y."/>
            <person name="Uchiyama I."/>
        </authorList>
    </citation>
    <scope>NUCLEOTIDE SEQUENCE [LARGE SCALE GENOMIC DNA]</scope>
    <source>
        <strain>DSM 14371 / CIP 107618 / JCM 11309 / KCTC 3954 / HTE831</strain>
    </source>
</reference>
<keyword id="KW-0145">Chemotaxis</keyword>
<keyword id="KW-0963">Cytoplasm</keyword>
<keyword id="KW-0378">Hydrolase</keyword>
<keyword id="KW-0597">Phosphoprotein</keyword>
<keyword id="KW-1185">Reference proteome</keyword>
<comment type="function">
    <text evidence="1">Involved in chemotaxis. Part of a chemotaxis signal transduction system that modulates chemotaxis in response to various stimuli. Catalyzes the demethylation of specific methylglutamate residues introduced into the chemoreceptors (methyl-accepting chemotaxis proteins or MCP) by CheR. Also mediates the irreversible deamidation of specific glutamine residues to glutamic acid.</text>
</comment>
<comment type="catalytic activity">
    <reaction evidence="1">
        <text>[protein]-L-glutamate 5-O-methyl ester + H2O = L-glutamyl-[protein] + methanol + H(+)</text>
        <dbReference type="Rhea" id="RHEA:23236"/>
        <dbReference type="Rhea" id="RHEA-COMP:10208"/>
        <dbReference type="Rhea" id="RHEA-COMP:10311"/>
        <dbReference type="ChEBI" id="CHEBI:15377"/>
        <dbReference type="ChEBI" id="CHEBI:15378"/>
        <dbReference type="ChEBI" id="CHEBI:17790"/>
        <dbReference type="ChEBI" id="CHEBI:29973"/>
        <dbReference type="ChEBI" id="CHEBI:82795"/>
        <dbReference type="EC" id="3.1.1.61"/>
    </reaction>
</comment>
<comment type="catalytic activity">
    <reaction evidence="1">
        <text>L-glutaminyl-[protein] + H2O = L-glutamyl-[protein] + NH4(+)</text>
        <dbReference type="Rhea" id="RHEA:16441"/>
        <dbReference type="Rhea" id="RHEA-COMP:10207"/>
        <dbReference type="Rhea" id="RHEA-COMP:10208"/>
        <dbReference type="ChEBI" id="CHEBI:15377"/>
        <dbReference type="ChEBI" id="CHEBI:28938"/>
        <dbReference type="ChEBI" id="CHEBI:29973"/>
        <dbReference type="ChEBI" id="CHEBI:30011"/>
        <dbReference type="EC" id="3.5.1.44"/>
    </reaction>
</comment>
<comment type="subcellular location">
    <subcellularLocation>
        <location evidence="1">Cytoplasm</location>
    </subcellularLocation>
</comment>
<comment type="domain">
    <text evidence="1">Contains a C-terminal catalytic domain, and an N-terminal region which modulates catalytic activity.</text>
</comment>
<comment type="PTM">
    <text evidence="1">Phosphorylated by CheA. Phosphorylation of the N-terminal regulatory domain activates the methylesterase activity.</text>
</comment>
<comment type="similarity">
    <text evidence="1">Belongs to the CheB family.</text>
</comment>
<feature type="chain" id="PRO_0000158006" description="Protein-glutamate methylesterase/protein-glutamine glutaminase">
    <location>
        <begin position="1"/>
        <end position="352"/>
    </location>
</feature>
<feature type="domain" description="Response regulatory" evidence="1">
    <location>
        <begin position="5"/>
        <end position="122"/>
    </location>
</feature>
<feature type="domain" description="CheB-type methylesterase" evidence="1">
    <location>
        <begin position="163"/>
        <end position="352"/>
    </location>
</feature>
<feature type="active site" evidence="1">
    <location>
        <position position="171"/>
    </location>
</feature>
<feature type="active site" evidence="1">
    <location>
        <position position="198"/>
    </location>
</feature>
<feature type="active site" evidence="1">
    <location>
        <position position="294"/>
    </location>
</feature>
<feature type="modified residue" description="4-aspartylphosphate" evidence="1">
    <location>
        <position position="56"/>
    </location>
</feature>
<accession>Q8EQW0</accession>
<sequence>MRKVRAIVIDDSAFMRKIISDILDNDPRIEVVAVARNGEDGLNKVIQLSPDVVTLDVHMPKMDGMQALQRIMNEHPVPVVMLSSVTKAGAEKTIQAISNGAVDFIMKPSGSISLDIRNVEDEIRKKVILASTVRVKSTQEASEEDFQSTRTVPTINREKKYRRSIVSIGTSTGGPKALQKVLTELPKDIQAPIVIVQHMPPGFTKSLADRLNSICAISVKEAVHGEILQSGTAYIAPGGFHMQVENVGMSLAIALDKSPPLKGHRPSVNKLFSSLQHIKNYNKITCILTGMGNDGTDGLQQLRLNEGSTISLAESADTAIVYGMPKAAVNAGLIDYEMSLHEIPSLIVKQLT</sequence>
<proteinExistence type="inferred from homology"/>
<name>CHEB_OCEIH</name>
<organism>
    <name type="scientific">Oceanobacillus iheyensis (strain DSM 14371 / CIP 107618 / JCM 11309 / KCTC 3954 / HTE831)</name>
    <dbReference type="NCBI Taxonomy" id="221109"/>
    <lineage>
        <taxon>Bacteria</taxon>
        <taxon>Bacillati</taxon>
        <taxon>Bacillota</taxon>
        <taxon>Bacilli</taxon>
        <taxon>Bacillales</taxon>
        <taxon>Bacillaceae</taxon>
        <taxon>Oceanobacillus</taxon>
    </lineage>
</organism>
<evidence type="ECO:0000255" key="1">
    <source>
        <dbReference type="HAMAP-Rule" id="MF_00099"/>
    </source>
</evidence>
<gene>
    <name evidence="1" type="primary">cheB</name>
    <name type="ordered locus">OB1578</name>
</gene>
<dbReference type="EC" id="3.1.1.61" evidence="1"/>
<dbReference type="EC" id="3.5.1.44" evidence="1"/>
<dbReference type="EMBL" id="BA000028">
    <property type="protein sequence ID" value="BAC13534.1"/>
    <property type="molecule type" value="Genomic_DNA"/>
</dbReference>
<dbReference type="RefSeq" id="WP_011065978.1">
    <property type="nucleotide sequence ID" value="NC_004193.1"/>
</dbReference>
<dbReference type="SMR" id="Q8EQW0"/>
<dbReference type="STRING" id="221109.gene:10733818"/>
<dbReference type="KEGG" id="oih:OB1578"/>
<dbReference type="eggNOG" id="COG2201">
    <property type="taxonomic scope" value="Bacteria"/>
</dbReference>
<dbReference type="HOGENOM" id="CLU_000445_51_0_9"/>
<dbReference type="OrthoDB" id="9793421at2"/>
<dbReference type="PhylomeDB" id="Q8EQW0"/>
<dbReference type="Proteomes" id="UP000000822">
    <property type="component" value="Chromosome"/>
</dbReference>
<dbReference type="GO" id="GO:0005737">
    <property type="term" value="C:cytoplasm"/>
    <property type="evidence" value="ECO:0007669"/>
    <property type="project" value="UniProtKB-SubCell"/>
</dbReference>
<dbReference type="GO" id="GO:0000156">
    <property type="term" value="F:phosphorelay response regulator activity"/>
    <property type="evidence" value="ECO:0007669"/>
    <property type="project" value="InterPro"/>
</dbReference>
<dbReference type="GO" id="GO:0008984">
    <property type="term" value="F:protein-glutamate methylesterase activity"/>
    <property type="evidence" value="ECO:0007669"/>
    <property type="project" value="UniProtKB-UniRule"/>
</dbReference>
<dbReference type="GO" id="GO:0050568">
    <property type="term" value="F:protein-glutamine glutaminase activity"/>
    <property type="evidence" value="ECO:0007669"/>
    <property type="project" value="UniProtKB-UniRule"/>
</dbReference>
<dbReference type="GO" id="GO:0006935">
    <property type="term" value="P:chemotaxis"/>
    <property type="evidence" value="ECO:0007669"/>
    <property type="project" value="UniProtKB-UniRule"/>
</dbReference>
<dbReference type="CDD" id="cd16432">
    <property type="entry name" value="CheB_Rec"/>
    <property type="match status" value="1"/>
</dbReference>
<dbReference type="CDD" id="cd17541">
    <property type="entry name" value="REC_CheB-like"/>
    <property type="match status" value="1"/>
</dbReference>
<dbReference type="Gene3D" id="3.40.50.2300">
    <property type="match status" value="1"/>
</dbReference>
<dbReference type="Gene3D" id="3.40.50.180">
    <property type="entry name" value="Methylesterase CheB, C-terminal domain"/>
    <property type="match status" value="1"/>
</dbReference>
<dbReference type="HAMAP" id="MF_00099">
    <property type="entry name" value="CheB_chemtxs"/>
    <property type="match status" value="1"/>
</dbReference>
<dbReference type="InterPro" id="IPR008248">
    <property type="entry name" value="CheB-like"/>
</dbReference>
<dbReference type="InterPro" id="IPR035909">
    <property type="entry name" value="CheB_C"/>
</dbReference>
<dbReference type="InterPro" id="IPR011006">
    <property type="entry name" value="CheY-like_superfamily"/>
</dbReference>
<dbReference type="InterPro" id="IPR000673">
    <property type="entry name" value="Sig_transdc_resp-reg_Me-estase"/>
</dbReference>
<dbReference type="InterPro" id="IPR001789">
    <property type="entry name" value="Sig_transdc_resp-reg_receiver"/>
</dbReference>
<dbReference type="NCBIfam" id="NF001965">
    <property type="entry name" value="PRK00742.1"/>
    <property type="match status" value="1"/>
</dbReference>
<dbReference type="PANTHER" id="PTHR42872">
    <property type="entry name" value="PROTEIN-GLUTAMATE METHYLESTERASE/PROTEIN-GLUTAMINE GLUTAMINASE"/>
    <property type="match status" value="1"/>
</dbReference>
<dbReference type="PANTHER" id="PTHR42872:SF3">
    <property type="entry name" value="PROTEIN-GLUTAMATE METHYLESTERASE_PROTEIN-GLUTAMINE GLUTAMINASE 1"/>
    <property type="match status" value="1"/>
</dbReference>
<dbReference type="Pfam" id="PF01339">
    <property type="entry name" value="CheB_methylest"/>
    <property type="match status" value="1"/>
</dbReference>
<dbReference type="Pfam" id="PF00072">
    <property type="entry name" value="Response_reg"/>
    <property type="match status" value="1"/>
</dbReference>
<dbReference type="PIRSF" id="PIRSF000876">
    <property type="entry name" value="RR_chemtxs_CheB"/>
    <property type="match status" value="1"/>
</dbReference>
<dbReference type="SMART" id="SM00448">
    <property type="entry name" value="REC"/>
    <property type="match status" value="1"/>
</dbReference>
<dbReference type="SUPFAM" id="SSF52172">
    <property type="entry name" value="CheY-like"/>
    <property type="match status" value="1"/>
</dbReference>
<dbReference type="SUPFAM" id="SSF52738">
    <property type="entry name" value="Methylesterase CheB, C-terminal domain"/>
    <property type="match status" value="1"/>
</dbReference>
<dbReference type="PROSITE" id="PS50122">
    <property type="entry name" value="CHEB"/>
    <property type="match status" value="1"/>
</dbReference>
<dbReference type="PROSITE" id="PS50110">
    <property type="entry name" value="RESPONSE_REGULATORY"/>
    <property type="match status" value="1"/>
</dbReference>
<protein>
    <recommendedName>
        <fullName evidence="1">Protein-glutamate methylesterase/protein-glutamine glutaminase</fullName>
        <ecNumber evidence="1">3.1.1.61</ecNumber>
        <ecNumber evidence="1">3.5.1.44</ecNumber>
    </recommendedName>
</protein>